<organism>
    <name type="scientific">Porphyra purpurea</name>
    <name type="common">Red seaweed</name>
    <name type="synonym">Ulva purpurea</name>
    <dbReference type="NCBI Taxonomy" id="2787"/>
    <lineage>
        <taxon>Eukaryota</taxon>
        <taxon>Rhodophyta</taxon>
        <taxon>Bangiophyceae</taxon>
        <taxon>Bangiales</taxon>
        <taxon>Bangiaceae</taxon>
        <taxon>Porphyra</taxon>
    </lineage>
</organism>
<protein>
    <recommendedName>
        <fullName>Elongation factor Ts, chloroplastic</fullName>
        <shortName evidence="1">EF-Ts</shortName>
    </recommendedName>
</protein>
<comment type="function">
    <text evidence="1">Associates with the EF-Tu.GDP complex and induces the exchange of GDP to GTP. It remains bound to the aminoacyl-tRNA.EF-Tu.GTP complex up to the GTP hydrolysis stage on the ribosome.</text>
</comment>
<comment type="subcellular location">
    <subcellularLocation>
        <location>Plastid</location>
        <location>Chloroplast</location>
    </subcellularLocation>
</comment>
<comment type="similarity">
    <text evidence="1">Belongs to the EF-Ts family.</text>
</comment>
<feature type="chain" id="PRO_0000161250" description="Elongation factor Ts, chloroplastic">
    <location>
        <begin position="1"/>
        <end position="220"/>
    </location>
</feature>
<gene>
    <name type="primary">tsf</name>
</gene>
<geneLocation type="chloroplast"/>
<accession>P51248</accession>
<proteinExistence type="inferred from homology"/>
<dbReference type="EMBL" id="U38804">
    <property type="protein sequence ID" value="AAC08134.1"/>
    <property type="molecule type" value="Genomic_DNA"/>
</dbReference>
<dbReference type="PIR" id="S73169">
    <property type="entry name" value="S73169"/>
</dbReference>
<dbReference type="RefSeq" id="NP_053858.1">
    <property type="nucleotide sequence ID" value="NC_000925.1"/>
</dbReference>
<dbReference type="SMR" id="P51248"/>
<dbReference type="GeneID" id="809877"/>
<dbReference type="GO" id="GO:0009507">
    <property type="term" value="C:chloroplast"/>
    <property type="evidence" value="ECO:0007669"/>
    <property type="project" value="UniProtKB-SubCell"/>
</dbReference>
<dbReference type="GO" id="GO:0005739">
    <property type="term" value="C:mitochondrion"/>
    <property type="evidence" value="ECO:0007669"/>
    <property type="project" value="UniProtKB-UniRule"/>
</dbReference>
<dbReference type="GO" id="GO:0003746">
    <property type="term" value="F:translation elongation factor activity"/>
    <property type="evidence" value="ECO:0007669"/>
    <property type="project" value="UniProtKB-UniRule"/>
</dbReference>
<dbReference type="CDD" id="cd14275">
    <property type="entry name" value="UBA_EF-Ts"/>
    <property type="match status" value="1"/>
</dbReference>
<dbReference type="FunFam" id="1.10.8.10:FF:000001">
    <property type="entry name" value="Elongation factor Ts"/>
    <property type="match status" value="1"/>
</dbReference>
<dbReference type="Gene3D" id="1.10.286.20">
    <property type="match status" value="1"/>
</dbReference>
<dbReference type="Gene3D" id="1.10.8.10">
    <property type="entry name" value="DNA helicase RuvA subunit, C-terminal domain"/>
    <property type="match status" value="1"/>
</dbReference>
<dbReference type="Gene3D" id="3.30.479.20">
    <property type="entry name" value="Elongation factor Ts, dimerisation domain"/>
    <property type="match status" value="1"/>
</dbReference>
<dbReference type="HAMAP" id="MF_00050">
    <property type="entry name" value="EF_Ts"/>
    <property type="match status" value="1"/>
</dbReference>
<dbReference type="InterPro" id="IPR036402">
    <property type="entry name" value="EF-Ts_dimer_sf"/>
</dbReference>
<dbReference type="InterPro" id="IPR001816">
    <property type="entry name" value="Transl_elong_EFTs/EF1B"/>
</dbReference>
<dbReference type="InterPro" id="IPR014039">
    <property type="entry name" value="Transl_elong_EFTs/EF1B_dimer"/>
</dbReference>
<dbReference type="InterPro" id="IPR018101">
    <property type="entry name" value="Transl_elong_Ts_CS"/>
</dbReference>
<dbReference type="InterPro" id="IPR009060">
    <property type="entry name" value="UBA-like_sf"/>
</dbReference>
<dbReference type="NCBIfam" id="TIGR00116">
    <property type="entry name" value="tsf"/>
    <property type="match status" value="1"/>
</dbReference>
<dbReference type="PANTHER" id="PTHR11741">
    <property type="entry name" value="ELONGATION FACTOR TS"/>
    <property type="match status" value="1"/>
</dbReference>
<dbReference type="PANTHER" id="PTHR11741:SF0">
    <property type="entry name" value="ELONGATION FACTOR TS, MITOCHONDRIAL"/>
    <property type="match status" value="1"/>
</dbReference>
<dbReference type="Pfam" id="PF00889">
    <property type="entry name" value="EF_TS"/>
    <property type="match status" value="1"/>
</dbReference>
<dbReference type="SUPFAM" id="SSF54713">
    <property type="entry name" value="Elongation factor Ts (EF-Ts), dimerisation domain"/>
    <property type="match status" value="1"/>
</dbReference>
<dbReference type="SUPFAM" id="SSF46934">
    <property type="entry name" value="UBA-like"/>
    <property type="match status" value="1"/>
</dbReference>
<dbReference type="PROSITE" id="PS01126">
    <property type="entry name" value="EF_TS_1"/>
    <property type="match status" value="1"/>
</dbReference>
<dbReference type="PROSITE" id="PS01127">
    <property type="entry name" value="EF_TS_2"/>
    <property type="match status" value="1"/>
</dbReference>
<evidence type="ECO:0000255" key="1">
    <source>
        <dbReference type="HAMAP-Rule" id="MF_03135"/>
    </source>
</evidence>
<reference key="1">
    <citation type="journal article" date="1995" name="Plant Mol. Biol. Rep.">
        <title>Complete nucleotide sequence of the Porphyra purpurea chloroplast genome.</title>
        <authorList>
            <person name="Reith M.E."/>
            <person name="Munholland J."/>
        </authorList>
    </citation>
    <scope>NUCLEOTIDE SEQUENCE [LARGE SCALE GENOMIC DNA]</scope>
    <source>
        <strain>Avonport</strain>
    </source>
</reference>
<sequence>MTLQISAQNVKALRDKTGAGMMDCKKALEASNGNEEKALDSLRQKGLASANKKSGRTAIEGLLESYIHTGGRIGVLVEVNCETDFVARRPEFQKLAKDIAMQIAACPNVEYVSMMHISDETISLEKRIEAGRDDIKDKPAEMIEKIVEGRIKKRLKELSLLDQMFIRNQDITIEDLINQNIALLGENIKIRRFVRFILGGGEENTKANFADEVADILNKK</sequence>
<keyword id="KW-0150">Chloroplast</keyword>
<keyword id="KW-0251">Elongation factor</keyword>
<keyword id="KW-0934">Plastid</keyword>
<keyword id="KW-0648">Protein biosynthesis</keyword>
<name>EFTS_PORPU</name>